<protein>
    <recommendedName>
        <fullName>Cytochrome b</fullName>
    </recommendedName>
    <alternativeName>
        <fullName>Complex III subunit 3</fullName>
    </alternativeName>
    <alternativeName>
        <fullName>Complex III subunit III</fullName>
    </alternativeName>
    <alternativeName>
        <fullName>Cytochrome b-c1 complex subunit 3</fullName>
    </alternativeName>
    <alternativeName>
        <fullName>Ubiquinol-cytochrome-c reductase complex cytochrome b subunit</fullName>
    </alternativeName>
</protein>
<sequence length="380" mass="43237">MAMNIRKTHPLIKIVNNSLIDLPTPSNISIWWNFGSLLGLCLIIQILTGLFLAMHYTADISSAFSSVAHICRDVNYGWLIRNTHANGASMFFICVYLHIARGFYYGSYLYKETWNIGVIILVLLMATAFVGYVLPWGQMSFWGATVITNLLSALPYIGDMLVQWIWGGFSVDNATLTRFFTFHFLLPFVIVALTMVHLLFLHETGSNNPIGLDSNMDKIPFHPYYSYKDLLGFFMLLLLITFLALFMPNLLGDTENFIPANPLVTPPHIKPEWYFLFAYAILRSIPNKLGGVLALAFSIFILLLVPMLHTSKQQSLIFRPITQILFWLLVANTIILTWIGGQPVEQPFIIIGQIASITYFSFFLILFPLAGWWENKMLKL</sequence>
<comment type="function">
    <text evidence="2">Component of the ubiquinol-cytochrome c reductase complex (complex III or cytochrome b-c1 complex) that is part of the mitochondrial respiratory chain. The b-c1 complex mediates electron transfer from ubiquinol to cytochrome c. Contributes to the generation of a proton gradient across the mitochondrial membrane that is then used for ATP synthesis.</text>
</comment>
<comment type="cofactor">
    <cofactor evidence="2">
        <name>heme b</name>
        <dbReference type="ChEBI" id="CHEBI:60344"/>
    </cofactor>
    <text evidence="2">Binds 2 heme b groups non-covalently.</text>
</comment>
<comment type="subunit">
    <text evidence="2">The cytochrome bc1 complex contains 3 respiratory subunits (MT-CYB, CYC1 and UQCRFS1), 2 core proteins (UQCRC1 and UQCRC2) and probably 6 low-molecular weight proteins.</text>
</comment>
<comment type="subcellular location">
    <subcellularLocation>
        <location evidence="2">Mitochondrion inner membrane</location>
        <topology evidence="2">Multi-pass membrane protein</topology>
    </subcellularLocation>
</comment>
<comment type="miscellaneous">
    <text evidence="1">Heme 1 (or BL or b562) is low-potential and absorbs at about 562 nm, and heme 2 (or BH or b566) is high-potential and absorbs at about 566 nm.</text>
</comment>
<comment type="similarity">
    <text evidence="3 4">Belongs to the cytochrome b family.</text>
</comment>
<comment type="caution">
    <text evidence="2">The full-length protein contains only eight transmembrane helices, not nine as predicted by bioinformatics tools.</text>
</comment>
<proteinExistence type="inferred from homology"/>
<gene>
    <name type="primary">mt-cyb</name>
    <name type="synonym">cob</name>
    <name type="synonym">cytb</name>
    <name type="synonym">mtcyb</name>
</gene>
<name>CYB_MACGD</name>
<evidence type="ECO:0000250" key="1"/>
<evidence type="ECO:0000250" key="2">
    <source>
        <dbReference type="UniProtKB" id="P00157"/>
    </source>
</evidence>
<evidence type="ECO:0000255" key="3">
    <source>
        <dbReference type="PROSITE-ProRule" id="PRU00967"/>
    </source>
</evidence>
<evidence type="ECO:0000255" key="4">
    <source>
        <dbReference type="PROSITE-ProRule" id="PRU00968"/>
    </source>
</evidence>
<feature type="chain" id="PRO_0000061039" description="Cytochrome b">
    <location>
        <begin position="1"/>
        <end position="380"/>
    </location>
</feature>
<feature type="transmembrane region" description="Helical" evidence="2">
    <location>
        <begin position="34"/>
        <end position="54"/>
    </location>
</feature>
<feature type="transmembrane region" description="Helical" evidence="2">
    <location>
        <begin position="78"/>
        <end position="99"/>
    </location>
</feature>
<feature type="transmembrane region" description="Helical" evidence="2">
    <location>
        <begin position="114"/>
        <end position="134"/>
    </location>
</feature>
<feature type="transmembrane region" description="Helical" evidence="2">
    <location>
        <begin position="179"/>
        <end position="199"/>
    </location>
</feature>
<feature type="transmembrane region" description="Helical" evidence="2">
    <location>
        <begin position="227"/>
        <end position="247"/>
    </location>
</feature>
<feature type="transmembrane region" description="Helical" evidence="2">
    <location>
        <begin position="289"/>
        <end position="309"/>
    </location>
</feature>
<feature type="transmembrane region" description="Helical" evidence="2">
    <location>
        <begin position="321"/>
        <end position="341"/>
    </location>
</feature>
<feature type="transmembrane region" description="Helical" evidence="2">
    <location>
        <begin position="348"/>
        <end position="368"/>
    </location>
</feature>
<feature type="binding site" description="axial binding residue" evidence="2">
    <location>
        <position position="84"/>
    </location>
    <ligand>
        <name>heme b</name>
        <dbReference type="ChEBI" id="CHEBI:60344"/>
        <label>b562</label>
    </ligand>
    <ligandPart>
        <name>Fe</name>
        <dbReference type="ChEBI" id="CHEBI:18248"/>
    </ligandPart>
</feature>
<feature type="binding site" description="axial binding residue" evidence="2">
    <location>
        <position position="98"/>
    </location>
    <ligand>
        <name>heme b</name>
        <dbReference type="ChEBI" id="CHEBI:60344"/>
        <label>b566</label>
    </ligand>
    <ligandPart>
        <name>Fe</name>
        <dbReference type="ChEBI" id="CHEBI:18248"/>
    </ligandPart>
</feature>
<feature type="binding site" description="axial binding residue" evidence="2">
    <location>
        <position position="183"/>
    </location>
    <ligand>
        <name>heme b</name>
        <dbReference type="ChEBI" id="CHEBI:60344"/>
        <label>b562</label>
    </ligand>
    <ligandPart>
        <name>Fe</name>
        <dbReference type="ChEBI" id="CHEBI:18248"/>
    </ligandPart>
</feature>
<feature type="binding site" description="axial binding residue" evidence="2">
    <location>
        <position position="197"/>
    </location>
    <ligand>
        <name>heme b</name>
        <dbReference type="ChEBI" id="CHEBI:60344"/>
        <label>b566</label>
    </ligand>
    <ligandPart>
        <name>Fe</name>
        <dbReference type="ChEBI" id="CHEBI:18248"/>
    </ligandPart>
</feature>
<feature type="binding site" evidence="2">
    <location>
        <position position="202"/>
    </location>
    <ligand>
        <name>a ubiquinone</name>
        <dbReference type="ChEBI" id="CHEBI:16389"/>
    </ligand>
</feature>
<reference key="1">
    <citation type="journal article" date="1999" name="Fish. Sci.">
        <title>Molecular phylogeny of Asian freshwater and marine stingrays based on the DNA nucleotide and deduced amino acid sequences of the cytochrome b gene.</title>
        <authorList>
            <person name="Sezaki K."/>
            <person name="Begum R.A."/>
            <person name="Wongrat P."/>
            <person name="Srivastava M.P."/>
            <person name="SriKantha S."/>
            <person name="Kikuchi K."/>
            <person name="Ishihara H."/>
            <person name="Tanaka S."/>
            <person name="Taniuchi T."/>
            <person name="Watabe S."/>
        </authorList>
    </citation>
    <scope>NUCLEOTIDE SEQUENCE [GENOMIC DNA]</scope>
</reference>
<organism>
    <name type="scientific">Maculabatis gerrardi</name>
    <name type="common">Sharpnose stingray</name>
    <name type="synonym">Trygon gerrardi</name>
    <dbReference type="NCBI Taxonomy" id="2599772"/>
    <lineage>
        <taxon>Eukaryota</taxon>
        <taxon>Metazoa</taxon>
        <taxon>Chordata</taxon>
        <taxon>Craniata</taxon>
        <taxon>Vertebrata</taxon>
        <taxon>Chondrichthyes</taxon>
        <taxon>Elasmobranchii</taxon>
        <taxon>Batoidea</taxon>
        <taxon>Myliobatiformes</taxon>
        <taxon>Dasyatidae</taxon>
        <taxon>Maculabatis</taxon>
    </lineage>
</organism>
<accession>Q9XKK0</accession>
<keyword id="KW-0249">Electron transport</keyword>
<keyword id="KW-0349">Heme</keyword>
<keyword id="KW-0408">Iron</keyword>
<keyword id="KW-0472">Membrane</keyword>
<keyword id="KW-0479">Metal-binding</keyword>
<keyword id="KW-0496">Mitochondrion</keyword>
<keyword id="KW-0999">Mitochondrion inner membrane</keyword>
<keyword id="KW-0679">Respiratory chain</keyword>
<keyword id="KW-0812">Transmembrane</keyword>
<keyword id="KW-1133">Transmembrane helix</keyword>
<keyword id="KW-0813">Transport</keyword>
<keyword id="KW-0830">Ubiquinone</keyword>
<dbReference type="EMBL" id="AB021498">
    <property type="protein sequence ID" value="BAA78468.1"/>
    <property type="molecule type" value="Genomic_DNA"/>
</dbReference>
<dbReference type="SMR" id="Q9XKK0"/>
<dbReference type="GO" id="GO:0005743">
    <property type="term" value="C:mitochondrial inner membrane"/>
    <property type="evidence" value="ECO:0007669"/>
    <property type="project" value="UniProtKB-SubCell"/>
</dbReference>
<dbReference type="GO" id="GO:0045275">
    <property type="term" value="C:respiratory chain complex III"/>
    <property type="evidence" value="ECO:0007669"/>
    <property type="project" value="InterPro"/>
</dbReference>
<dbReference type="GO" id="GO:0046872">
    <property type="term" value="F:metal ion binding"/>
    <property type="evidence" value="ECO:0007669"/>
    <property type="project" value="UniProtKB-KW"/>
</dbReference>
<dbReference type="GO" id="GO:0008121">
    <property type="term" value="F:ubiquinol-cytochrome-c reductase activity"/>
    <property type="evidence" value="ECO:0007669"/>
    <property type="project" value="InterPro"/>
</dbReference>
<dbReference type="GO" id="GO:0006122">
    <property type="term" value="P:mitochondrial electron transport, ubiquinol to cytochrome c"/>
    <property type="evidence" value="ECO:0007669"/>
    <property type="project" value="TreeGrafter"/>
</dbReference>
<dbReference type="CDD" id="cd00290">
    <property type="entry name" value="cytochrome_b_C"/>
    <property type="match status" value="1"/>
</dbReference>
<dbReference type="CDD" id="cd00284">
    <property type="entry name" value="Cytochrome_b_N"/>
    <property type="match status" value="1"/>
</dbReference>
<dbReference type="FunFam" id="1.20.810.10:FF:000002">
    <property type="entry name" value="Cytochrome b"/>
    <property type="match status" value="1"/>
</dbReference>
<dbReference type="Gene3D" id="1.20.810.10">
    <property type="entry name" value="Cytochrome Bc1 Complex, Chain C"/>
    <property type="match status" value="1"/>
</dbReference>
<dbReference type="InterPro" id="IPR005798">
    <property type="entry name" value="Cyt_b/b6_C"/>
</dbReference>
<dbReference type="InterPro" id="IPR036150">
    <property type="entry name" value="Cyt_b/b6_C_sf"/>
</dbReference>
<dbReference type="InterPro" id="IPR005797">
    <property type="entry name" value="Cyt_b/b6_N"/>
</dbReference>
<dbReference type="InterPro" id="IPR027387">
    <property type="entry name" value="Cytb/b6-like_sf"/>
</dbReference>
<dbReference type="InterPro" id="IPR030689">
    <property type="entry name" value="Cytochrome_b"/>
</dbReference>
<dbReference type="InterPro" id="IPR048260">
    <property type="entry name" value="Cytochrome_b_C_euk/bac"/>
</dbReference>
<dbReference type="InterPro" id="IPR048259">
    <property type="entry name" value="Cytochrome_b_N_euk/bac"/>
</dbReference>
<dbReference type="InterPro" id="IPR016174">
    <property type="entry name" value="Di-haem_cyt_TM"/>
</dbReference>
<dbReference type="PANTHER" id="PTHR19271">
    <property type="entry name" value="CYTOCHROME B"/>
    <property type="match status" value="1"/>
</dbReference>
<dbReference type="PANTHER" id="PTHR19271:SF16">
    <property type="entry name" value="CYTOCHROME B"/>
    <property type="match status" value="1"/>
</dbReference>
<dbReference type="Pfam" id="PF00032">
    <property type="entry name" value="Cytochrom_B_C"/>
    <property type="match status" value="1"/>
</dbReference>
<dbReference type="Pfam" id="PF00033">
    <property type="entry name" value="Cytochrome_B"/>
    <property type="match status" value="1"/>
</dbReference>
<dbReference type="PIRSF" id="PIRSF038885">
    <property type="entry name" value="COB"/>
    <property type="match status" value="1"/>
</dbReference>
<dbReference type="SUPFAM" id="SSF81648">
    <property type="entry name" value="a domain/subunit of cytochrome bc1 complex (Ubiquinol-cytochrome c reductase)"/>
    <property type="match status" value="1"/>
</dbReference>
<dbReference type="SUPFAM" id="SSF81342">
    <property type="entry name" value="Transmembrane di-heme cytochromes"/>
    <property type="match status" value="1"/>
</dbReference>
<dbReference type="PROSITE" id="PS51003">
    <property type="entry name" value="CYTB_CTER"/>
    <property type="match status" value="1"/>
</dbReference>
<dbReference type="PROSITE" id="PS51002">
    <property type="entry name" value="CYTB_NTER"/>
    <property type="match status" value="1"/>
</dbReference>
<geneLocation type="mitochondrion"/>